<comment type="function">
    <text evidence="1">Catalyzes the condensation of the acetyl group of acetyl-CoA with 3-methyl-2-oxobutanoate (2-ketoisovalerate) to form 3-carboxy-3-hydroxy-4-methylpentanoate (2-isopropylmalate).</text>
</comment>
<comment type="catalytic activity">
    <reaction evidence="1">
        <text>3-methyl-2-oxobutanoate + acetyl-CoA + H2O = (2S)-2-isopropylmalate + CoA + H(+)</text>
        <dbReference type="Rhea" id="RHEA:21524"/>
        <dbReference type="ChEBI" id="CHEBI:1178"/>
        <dbReference type="ChEBI" id="CHEBI:11851"/>
        <dbReference type="ChEBI" id="CHEBI:15377"/>
        <dbReference type="ChEBI" id="CHEBI:15378"/>
        <dbReference type="ChEBI" id="CHEBI:57287"/>
        <dbReference type="ChEBI" id="CHEBI:57288"/>
        <dbReference type="EC" id="2.3.3.13"/>
    </reaction>
</comment>
<comment type="cofactor">
    <cofactor evidence="1">
        <name>Mn(2+)</name>
        <dbReference type="ChEBI" id="CHEBI:29035"/>
    </cofactor>
</comment>
<comment type="pathway">
    <text evidence="1">Amino-acid biosynthesis; L-leucine biosynthesis; L-leucine from 3-methyl-2-oxobutanoate: step 1/4.</text>
</comment>
<comment type="subunit">
    <text evidence="1">Homodimer.</text>
</comment>
<comment type="subcellular location">
    <subcellularLocation>
        <location evidence="1">Cytoplasm</location>
    </subcellularLocation>
</comment>
<comment type="similarity">
    <text evidence="1">Belongs to the alpha-IPM synthase/homocitrate synthase family. LeuA type 1 subfamily.</text>
</comment>
<feature type="chain" id="PRO_1000149181" description="2-isopropylmalate synthase">
    <location>
        <begin position="1"/>
        <end position="503"/>
    </location>
</feature>
<feature type="domain" description="Pyruvate carboxyltransferase" evidence="1">
    <location>
        <begin position="4"/>
        <end position="264"/>
    </location>
</feature>
<feature type="region of interest" description="Regulatory domain" evidence="1">
    <location>
        <begin position="388"/>
        <end position="503"/>
    </location>
</feature>
<feature type="binding site" evidence="1">
    <location>
        <position position="13"/>
    </location>
    <ligand>
        <name>Mn(2+)</name>
        <dbReference type="ChEBI" id="CHEBI:29035"/>
    </ligand>
</feature>
<feature type="binding site" evidence="1">
    <location>
        <position position="201"/>
    </location>
    <ligand>
        <name>Mn(2+)</name>
        <dbReference type="ChEBI" id="CHEBI:29035"/>
    </ligand>
</feature>
<feature type="binding site" evidence="1">
    <location>
        <position position="203"/>
    </location>
    <ligand>
        <name>Mn(2+)</name>
        <dbReference type="ChEBI" id="CHEBI:29035"/>
    </ligand>
</feature>
<feature type="binding site" evidence="1">
    <location>
        <position position="237"/>
    </location>
    <ligand>
        <name>Mn(2+)</name>
        <dbReference type="ChEBI" id="CHEBI:29035"/>
    </ligand>
</feature>
<accession>B8E2W9</accession>
<evidence type="ECO:0000255" key="1">
    <source>
        <dbReference type="HAMAP-Rule" id="MF_01025"/>
    </source>
</evidence>
<name>LEU1_DICTD</name>
<sequence>MGKLYIFDTTLRDGEQTPGVNLNKEEKLEIAKQLAKLNVDIIEAGFPIASPGEFEAVKNIAEKVKGPIIAALARAIPMDIDRAWEAIKYSESPRIHTFIATSDIHIEKKLKKTRDEVLEQAVSAVKYAKRYCSDVEFSAEDAVRSDFNFLVKIFEAVIEAGATVINVPDTVGYALPWEFGELIRRLKENIRNIDKARVSVHCHNDLGLATANSLSAIVNGAEQVECTVNGLGERAGNAAMEEIVMAIKVRRLPFEVSIKTEEIYKTSKLVSNLTGIPIQPNKAIVGENAFAHESGIHQHGVIQDPSTYEIIDPKTIGIPESKIVLGKHSGKHAFEKRLQELGYSLPPDQLEEAFRRFKELADKKKEITDKDIEALVSNQIRIIPEYYKLRHLQVVSGIGIVPTATIIISENGEEIKTVEIGNGPVDAVYKAITKAVKVPHSLEDFSLKSVTGGTDALGEAMVKLSDKDGNIYVGRATSTDVIEASALAYLRALNQLVMLKGKD</sequence>
<gene>
    <name evidence="1" type="primary">leuA</name>
    <name type="ordered locus">Dtur_1190</name>
</gene>
<protein>
    <recommendedName>
        <fullName evidence="1">2-isopropylmalate synthase</fullName>
        <ecNumber evidence="1">2.3.3.13</ecNumber>
    </recommendedName>
    <alternativeName>
        <fullName evidence="1">Alpha-IPM synthase</fullName>
    </alternativeName>
    <alternativeName>
        <fullName evidence="1">Alpha-isopropylmalate synthase</fullName>
    </alternativeName>
</protein>
<keyword id="KW-0028">Amino-acid biosynthesis</keyword>
<keyword id="KW-0100">Branched-chain amino acid biosynthesis</keyword>
<keyword id="KW-0963">Cytoplasm</keyword>
<keyword id="KW-0432">Leucine biosynthesis</keyword>
<keyword id="KW-0464">Manganese</keyword>
<keyword id="KW-0479">Metal-binding</keyword>
<keyword id="KW-1185">Reference proteome</keyword>
<keyword id="KW-0808">Transferase</keyword>
<proteinExistence type="inferred from homology"/>
<organism>
    <name type="scientific">Dictyoglomus turgidum (strain DSM 6724 / Z-1310)</name>
    <dbReference type="NCBI Taxonomy" id="515635"/>
    <lineage>
        <taxon>Bacteria</taxon>
        <taxon>Pseudomonadati</taxon>
        <taxon>Dictyoglomota</taxon>
        <taxon>Dictyoglomia</taxon>
        <taxon>Dictyoglomales</taxon>
        <taxon>Dictyoglomaceae</taxon>
        <taxon>Dictyoglomus</taxon>
    </lineage>
</organism>
<reference key="1">
    <citation type="journal article" date="2016" name="Front. Microbiol.">
        <title>The complete genome sequence of hyperthermophile Dictyoglomus turgidum DSM 6724 reveals a specialized carbohydrate fermentor.</title>
        <authorList>
            <person name="Brumm P.J."/>
            <person name="Gowda K."/>
            <person name="Robb F.T."/>
            <person name="Mead D.A."/>
        </authorList>
    </citation>
    <scope>NUCLEOTIDE SEQUENCE [LARGE SCALE GENOMIC DNA]</scope>
    <source>
        <strain>DSM 6724 / Z-1310</strain>
    </source>
</reference>
<dbReference type="EC" id="2.3.3.13" evidence="1"/>
<dbReference type="EMBL" id="CP001251">
    <property type="protein sequence ID" value="ACK42469.1"/>
    <property type="molecule type" value="Genomic_DNA"/>
</dbReference>
<dbReference type="RefSeq" id="WP_012583551.1">
    <property type="nucleotide sequence ID" value="NC_011661.1"/>
</dbReference>
<dbReference type="RefSeq" id="YP_002353083.1">
    <property type="nucleotide sequence ID" value="NC_011661.1"/>
</dbReference>
<dbReference type="SMR" id="B8E2W9"/>
<dbReference type="FunCoup" id="B8E2W9">
    <property type="interactions" value="289"/>
</dbReference>
<dbReference type="STRING" id="515635.Dtur_1190"/>
<dbReference type="EnsemblBacteria" id="ACK42469">
    <property type="protein sequence ID" value="ACK42469"/>
    <property type="gene ID" value="Dtur_1190"/>
</dbReference>
<dbReference type="KEGG" id="dtu:Dtur_1190"/>
<dbReference type="PATRIC" id="fig|515635.4.peg.1227"/>
<dbReference type="eggNOG" id="COG0119">
    <property type="taxonomic scope" value="Bacteria"/>
</dbReference>
<dbReference type="HOGENOM" id="CLU_022158_0_1_0"/>
<dbReference type="InParanoid" id="B8E2W9"/>
<dbReference type="OrthoDB" id="9804858at2"/>
<dbReference type="UniPathway" id="UPA00048">
    <property type="reaction ID" value="UER00070"/>
</dbReference>
<dbReference type="Proteomes" id="UP000007719">
    <property type="component" value="Chromosome"/>
</dbReference>
<dbReference type="GO" id="GO:0005737">
    <property type="term" value="C:cytoplasm"/>
    <property type="evidence" value="ECO:0007669"/>
    <property type="project" value="UniProtKB-SubCell"/>
</dbReference>
<dbReference type="GO" id="GO:0003852">
    <property type="term" value="F:2-isopropylmalate synthase activity"/>
    <property type="evidence" value="ECO:0000318"/>
    <property type="project" value="GO_Central"/>
</dbReference>
<dbReference type="GO" id="GO:0003985">
    <property type="term" value="F:acetyl-CoA C-acetyltransferase activity"/>
    <property type="evidence" value="ECO:0007669"/>
    <property type="project" value="UniProtKB-UniRule"/>
</dbReference>
<dbReference type="GO" id="GO:0030145">
    <property type="term" value="F:manganese ion binding"/>
    <property type="evidence" value="ECO:0007669"/>
    <property type="project" value="UniProtKB-UniRule"/>
</dbReference>
<dbReference type="GO" id="GO:0009098">
    <property type="term" value="P:L-leucine biosynthetic process"/>
    <property type="evidence" value="ECO:0000318"/>
    <property type="project" value="GO_Central"/>
</dbReference>
<dbReference type="CDD" id="cd07940">
    <property type="entry name" value="DRE_TIM_IPMS"/>
    <property type="match status" value="1"/>
</dbReference>
<dbReference type="FunFam" id="1.10.238.260:FF:000001">
    <property type="entry name" value="2-isopropylmalate synthase"/>
    <property type="match status" value="1"/>
</dbReference>
<dbReference type="FunFam" id="3.20.20.70:FF:000010">
    <property type="entry name" value="2-isopropylmalate synthase"/>
    <property type="match status" value="1"/>
</dbReference>
<dbReference type="FunFam" id="3.30.160.270:FF:000003">
    <property type="entry name" value="2-isopropylmalate synthase"/>
    <property type="match status" value="1"/>
</dbReference>
<dbReference type="Gene3D" id="1.10.238.260">
    <property type="match status" value="1"/>
</dbReference>
<dbReference type="Gene3D" id="3.30.160.270">
    <property type="match status" value="1"/>
</dbReference>
<dbReference type="Gene3D" id="3.20.20.70">
    <property type="entry name" value="Aldolase class I"/>
    <property type="match status" value="1"/>
</dbReference>
<dbReference type="HAMAP" id="MF_01025">
    <property type="entry name" value="LeuA_type1"/>
    <property type="match status" value="1"/>
</dbReference>
<dbReference type="InterPro" id="IPR050073">
    <property type="entry name" value="2-IPM_HCS-like"/>
</dbReference>
<dbReference type="InterPro" id="IPR013709">
    <property type="entry name" value="2-isopropylmalate_synth_dimer"/>
</dbReference>
<dbReference type="InterPro" id="IPR002034">
    <property type="entry name" value="AIPM/Hcit_synth_CS"/>
</dbReference>
<dbReference type="InterPro" id="IPR013785">
    <property type="entry name" value="Aldolase_TIM"/>
</dbReference>
<dbReference type="InterPro" id="IPR054691">
    <property type="entry name" value="LeuA/HCS_post-cat"/>
</dbReference>
<dbReference type="InterPro" id="IPR036230">
    <property type="entry name" value="LeuA_allosteric_dom_sf"/>
</dbReference>
<dbReference type="InterPro" id="IPR005671">
    <property type="entry name" value="LeuA_bact_synth"/>
</dbReference>
<dbReference type="InterPro" id="IPR000891">
    <property type="entry name" value="PYR_CT"/>
</dbReference>
<dbReference type="NCBIfam" id="TIGR00973">
    <property type="entry name" value="leuA_bact"/>
    <property type="match status" value="1"/>
</dbReference>
<dbReference type="NCBIfam" id="NF002085">
    <property type="entry name" value="PRK00915.1-2"/>
    <property type="match status" value="1"/>
</dbReference>
<dbReference type="NCBIfam" id="NF002086">
    <property type="entry name" value="PRK00915.1-3"/>
    <property type="match status" value="1"/>
</dbReference>
<dbReference type="PANTHER" id="PTHR10277:SF9">
    <property type="entry name" value="2-ISOPROPYLMALATE SYNTHASE 1, CHLOROPLASTIC-RELATED"/>
    <property type="match status" value="1"/>
</dbReference>
<dbReference type="PANTHER" id="PTHR10277">
    <property type="entry name" value="HOMOCITRATE SYNTHASE-RELATED"/>
    <property type="match status" value="1"/>
</dbReference>
<dbReference type="Pfam" id="PF22617">
    <property type="entry name" value="HCS_D2"/>
    <property type="match status" value="1"/>
</dbReference>
<dbReference type="Pfam" id="PF00682">
    <property type="entry name" value="HMGL-like"/>
    <property type="match status" value="1"/>
</dbReference>
<dbReference type="Pfam" id="PF08502">
    <property type="entry name" value="LeuA_dimer"/>
    <property type="match status" value="1"/>
</dbReference>
<dbReference type="SMART" id="SM00917">
    <property type="entry name" value="LeuA_dimer"/>
    <property type="match status" value="1"/>
</dbReference>
<dbReference type="SUPFAM" id="SSF110921">
    <property type="entry name" value="2-isopropylmalate synthase LeuA, allosteric (dimerisation) domain"/>
    <property type="match status" value="1"/>
</dbReference>
<dbReference type="SUPFAM" id="SSF51569">
    <property type="entry name" value="Aldolase"/>
    <property type="match status" value="1"/>
</dbReference>
<dbReference type="PROSITE" id="PS00815">
    <property type="entry name" value="AIPM_HOMOCIT_SYNTH_1"/>
    <property type="match status" value="1"/>
</dbReference>
<dbReference type="PROSITE" id="PS00816">
    <property type="entry name" value="AIPM_HOMOCIT_SYNTH_2"/>
    <property type="match status" value="1"/>
</dbReference>
<dbReference type="PROSITE" id="PS50991">
    <property type="entry name" value="PYR_CT"/>
    <property type="match status" value="1"/>
</dbReference>